<evidence type="ECO:0000250" key="1">
    <source>
        <dbReference type="UniProtKB" id="Q8N465"/>
    </source>
</evidence>
<evidence type="ECO:0000255" key="2"/>
<evidence type="ECO:0000255" key="3">
    <source>
        <dbReference type="PROSITE-ProRule" id="PRU00718"/>
    </source>
</evidence>
<evidence type="ECO:0000305" key="4"/>
<accession>A1L258</accession>
<keyword id="KW-0274">FAD</keyword>
<keyword id="KW-0285">Flavoprotein</keyword>
<keyword id="KW-0479">Metal-binding</keyword>
<keyword id="KW-0496">Mitochondrion</keyword>
<keyword id="KW-0560">Oxidoreductase</keyword>
<keyword id="KW-1185">Reference proteome</keyword>
<keyword id="KW-0809">Transit peptide</keyword>
<keyword id="KW-0862">Zinc</keyword>
<dbReference type="EC" id="1.1.99.39" evidence="1"/>
<dbReference type="EMBL" id="BC129361">
    <property type="protein sequence ID" value="AAI29362.1"/>
    <property type="molecule type" value="mRNA"/>
</dbReference>
<dbReference type="RefSeq" id="NP_001074066.1">
    <property type="nucleotide sequence ID" value="NM_001080597.1"/>
</dbReference>
<dbReference type="SMR" id="A1L258"/>
<dbReference type="FunCoup" id="A1L258">
    <property type="interactions" value="1473"/>
</dbReference>
<dbReference type="STRING" id="7955.ENSDARP00000079032"/>
<dbReference type="PaxDb" id="7955-ENSDARP00000079032"/>
<dbReference type="PeptideAtlas" id="A1L258"/>
<dbReference type="GeneID" id="565889"/>
<dbReference type="KEGG" id="dre:565889"/>
<dbReference type="AGR" id="ZFIN:ZDB-GENE-070112-482"/>
<dbReference type="CTD" id="728294"/>
<dbReference type="ZFIN" id="ZDB-GENE-070112-482">
    <property type="gene designation" value="d2hgdh"/>
</dbReference>
<dbReference type="eggNOG" id="KOG1232">
    <property type="taxonomic scope" value="Eukaryota"/>
</dbReference>
<dbReference type="InParanoid" id="A1L258"/>
<dbReference type="OrthoDB" id="5332616at2759"/>
<dbReference type="PhylomeDB" id="A1L258"/>
<dbReference type="Reactome" id="R-DRE-880009">
    <property type="pathway name" value="Interconversion of 2-oxoglutarate and 2-hydroxyglutarate"/>
</dbReference>
<dbReference type="PRO" id="PR:A1L258"/>
<dbReference type="Proteomes" id="UP000000437">
    <property type="component" value="Chromosome 2"/>
</dbReference>
<dbReference type="GO" id="GO:0005739">
    <property type="term" value="C:mitochondrion"/>
    <property type="evidence" value="ECO:0000318"/>
    <property type="project" value="GO_Central"/>
</dbReference>
<dbReference type="GO" id="GO:0051990">
    <property type="term" value="F:(R)-2-hydroxyglutarate dehydrogenase activity"/>
    <property type="evidence" value="ECO:0000250"/>
    <property type="project" value="UniProtKB"/>
</dbReference>
<dbReference type="GO" id="GO:0071949">
    <property type="term" value="F:FAD binding"/>
    <property type="evidence" value="ECO:0007669"/>
    <property type="project" value="InterPro"/>
</dbReference>
<dbReference type="GO" id="GO:0008270">
    <property type="term" value="F:zinc ion binding"/>
    <property type="evidence" value="ECO:0000250"/>
    <property type="project" value="UniProtKB"/>
</dbReference>
<dbReference type="GO" id="GO:0006108">
    <property type="term" value="P:malate metabolic process"/>
    <property type="evidence" value="ECO:0000250"/>
    <property type="project" value="UniProtKB"/>
</dbReference>
<dbReference type="FunFam" id="3.30.70.2190:FF:000001">
    <property type="entry name" value="D-2-hydroxyglutarate dehydrogenase mitochondrial"/>
    <property type="match status" value="1"/>
</dbReference>
<dbReference type="FunFam" id="3.30.70.2740:FF:000002">
    <property type="entry name" value="D-2-hydroxyglutarate dehydrogenase mitochondrial"/>
    <property type="match status" value="1"/>
</dbReference>
<dbReference type="FunFam" id="3.30.43.10:FF:000002">
    <property type="entry name" value="D-2-hydroxyglutarate dehydrogenase, mitochondrial"/>
    <property type="match status" value="1"/>
</dbReference>
<dbReference type="FunFam" id="3.30.465.10:FF:000053">
    <property type="entry name" value="D-lactate dehydrogenase (Cytochrome), putative"/>
    <property type="match status" value="1"/>
</dbReference>
<dbReference type="FunFam" id="1.10.45.10:FF:000001">
    <property type="entry name" value="D-lactate dehydrogenase mitochondrial"/>
    <property type="match status" value="1"/>
</dbReference>
<dbReference type="Gene3D" id="3.30.465.10">
    <property type="match status" value="1"/>
</dbReference>
<dbReference type="Gene3D" id="3.30.70.2190">
    <property type="match status" value="1"/>
</dbReference>
<dbReference type="Gene3D" id="3.30.70.2740">
    <property type="match status" value="1"/>
</dbReference>
<dbReference type="Gene3D" id="3.30.43.10">
    <property type="entry name" value="Uridine Diphospho-n-acetylenolpyruvylglucosamine Reductase, domain 2"/>
    <property type="match status" value="1"/>
</dbReference>
<dbReference type="Gene3D" id="1.10.45.10">
    <property type="entry name" value="Vanillyl-alcohol Oxidase, Chain A, domain 4"/>
    <property type="match status" value="1"/>
</dbReference>
<dbReference type="InterPro" id="IPR004113">
    <property type="entry name" value="FAD-bd_oxidored_4_C"/>
</dbReference>
<dbReference type="InterPro" id="IPR016166">
    <property type="entry name" value="FAD-bd_PCMH"/>
</dbReference>
<dbReference type="InterPro" id="IPR036318">
    <property type="entry name" value="FAD-bd_PCMH-like_sf"/>
</dbReference>
<dbReference type="InterPro" id="IPR016167">
    <property type="entry name" value="FAD-bd_PCMH_sub1"/>
</dbReference>
<dbReference type="InterPro" id="IPR016169">
    <property type="entry name" value="FAD-bd_PCMH_sub2"/>
</dbReference>
<dbReference type="InterPro" id="IPR016164">
    <property type="entry name" value="FAD-linked_Oxase-like_C"/>
</dbReference>
<dbReference type="InterPro" id="IPR051264">
    <property type="entry name" value="FAD-oxidored/transferase_4"/>
</dbReference>
<dbReference type="InterPro" id="IPR006094">
    <property type="entry name" value="Oxid_FAD_bind_N"/>
</dbReference>
<dbReference type="InterPro" id="IPR016171">
    <property type="entry name" value="Vanillyl_alc_oxidase_C-sub2"/>
</dbReference>
<dbReference type="PANTHER" id="PTHR43716">
    <property type="entry name" value="D-2-HYDROXYGLUTARATE DEHYDROGENASE, MITOCHONDRIAL"/>
    <property type="match status" value="1"/>
</dbReference>
<dbReference type="PANTHER" id="PTHR43716:SF1">
    <property type="entry name" value="D-2-HYDROXYGLUTARATE DEHYDROGENASE, MITOCHONDRIAL"/>
    <property type="match status" value="1"/>
</dbReference>
<dbReference type="Pfam" id="PF02913">
    <property type="entry name" value="FAD-oxidase_C"/>
    <property type="match status" value="1"/>
</dbReference>
<dbReference type="Pfam" id="PF01565">
    <property type="entry name" value="FAD_binding_4"/>
    <property type="match status" value="1"/>
</dbReference>
<dbReference type="SUPFAM" id="SSF56176">
    <property type="entry name" value="FAD-binding/transporter-associated domain-like"/>
    <property type="match status" value="1"/>
</dbReference>
<dbReference type="SUPFAM" id="SSF55103">
    <property type="entry name" value="FAD-linked oxidases, C-terminal domain"/>
    <property type="match status" value="1"/>
</dbReference>
<dbReference type="PROSITE" id="PS51387">
    <property type="entry name" value="FAD_PCMH"/>
    <property type="match status" value="1"/>
</dbReference>
<gene>
    <name type="primary">d2hgdh</name>
    <name type="ORF">zgc:158661</name>
</gene>
<reference key="1">
    <citation type="submission" date="2006-12" db="EMBL/GenBank/DDBJ databases">
        <authorList>
            <consortium name="NIH - Zebrafish Gene Collection (ZGC) project"/>
        </authorList>
    </citation>
    <scope>NUCLEOTIDE SEQUENCE [LARGE SCALE MRNA]</scope>
    <source>
        <tissue>Ovary</tissue>
    </source>
</reference>
<name>D2HDH_DANRE</name>
<organism>
    <name type="scientific">Danio rerio</name>
    <name type="common">Zebrafish</name>
    <name type="synonym">Brachydanio rerio</name>
    <dbReference type="NCBI Taxonomy" id="7955"/>
    <lineage>
        <taxon>Eukaryota</taxon>
        <taxon>Metazoa</taxon>
        <taxon>Chordata</taxon>
        <taxon>Craniata</taxon>
        <taxon>Vertebrata</taxon>
        <taxon>Euteleostomi</taxon>
        <taxon>Actinopterygii</taxon>
        <taxon>Neopterygii</taxon>
        <taxon>Teleostei</taxon>
        <taxon>Ostariophysi</taxon>
        <taxon>Cypriniformes</taxon>
        <taxon>Danionidae</taxon>
        <taxon>Danioninae</taxon>
        <taxon>Danio</taxon>
    </lineage>
</organism>
<feature type="transit peptide" description="Mitochondrion" evidence="2">
    <location>
        <begin position="1"/>
        <end position="55"/>
    </location>
</feature>
<feature type="chain" id="PRO_0000347235" description="D-2-hydroxyglutarate dehydrogenase, mitochondrial">
    <location>
        <begin position="56"/>
        <end position="533"/>
    </location>
</feature>
<feature type="domain" description="FAD-binding PCMH-type" evidence="3">
    <location>
        <begin position="107"/>
        <end position="286"/>
    </location>
</feature>
<feature type="binding site" evidence="1">
    <location>
        <position position="397"/>
    </location>
    <ligand>
        <name>(R)-2-hydroxyglutarate</name>
        <dbReference type="ChEBI" id="CHEBI:15801"/>
    </ligand>
</feature>
<feature type="binding site" evidence="1">
    <location>
        <position position="397"/>
    </location>
    <ligand>
        <name>(R)-lactate</name>
        <dbReference type="ChEBI" id="CHEBI:16004"/>
    </ligand>
</feature>
<feature type="binding site" evidence="1">
    <location>
        <position position="397"/>
    </location>
    <ligand>
        <name>(R)-malate</name>
        <dbReference type="ChEBI" id="CHEBI:15588"/>
    </ligand>
</feature>
<feature type="binding site" evidence="1">
    <location>
        <position position="401"/>
    </location>
    <ligand>
        <name>(R)-2-hydroxyglutarate</name>
        <dbReference type="ChEBI" id="CHEBI:15801"/>
    </ligand>
</feature>
<feature type="binding site" evidence="1">
    <location>
        <position position="401"/>
    </location>
    <ligand>
        <name>(R)-malate</name>
        <dbReference type="ChEBI" id="CHEBI:15588"/>
    </ligand>
</feature>
<feature type="binding site" evidence="1">
    <location>
        <position position="412"/>
    </location>
    <ligand>
        <name>(R)-2-hydroxyglutarate</name>
        <dbReference type="ChEBI" id="CHEBI:15801"/>
    </ligand>
</feature>
<feature type="binding site" evidence="1">
    <location>
        <position position="412"/>
    </location>
    <ligand>
        <name>(R)-malate</name>
        <dbReference type="ChEBI" id="CHEBI:15588"/>
    </ligand>
</feature>
<feature type="binding site" evidence="1">
    <location>
        <position position="445"/>
    </location>
    <ligand>
        <name>Zn(2+)</name>
        <dbReference type="ChEBI" id="CHEBI:29105"/>
    </ligand>
</feature>
<feature type="binding site" evidence="1">
    <location>
        <position position="452"/>
    </location>
    <ligand>
        <name>Zn(2+)</name>
        <dbReference type="ChEBI" id="CHEBI:29105"/>
    </ligand>
</feature>
<feature type="binding site" evidence="1">
    <location>
        <position position="454"/>
    </location>
    <ligand>
        <name>(R)-2-hydroxyglutarate</name>
        <dbReference type="ChEBI" id="CHEBI:15801"/>
    </ligand>
</feature>
<feature type="binding site" evidence="1">
    <location>
        <position position="486"/>
    </location>
    <ligand>
        <name>Zn(2+)</name>
        <dbReference type="ChEBI" id="CHEBI:29105"/>
    </ligand>
</feature>
<feature type="binding site" evidence="1">
    <location>
        <position position="487"/>
    </location>
    <ligand>
        <name>(R)-2-hydroxyglutarate</name>
        <dbReference type="ChEBI" id="CHEBI:15801"/>
    </ligand>
</feature>
<feature type="binding site" evidence="1">
    <location>
        <position position="487"/>
    </location>
    <ligand>
        <name>(R)-lactate</name>
        <dbReference type="ChEBI" id="CHEBI:16004"/>
    </ligand>
</feature>
<feature type="binding site" evidence="1">
    <location>
        <position position="487"/>
    </location>
    <ligand>
        <name>(R)-malate</name>
        <dbReference type="ChEBI" id="CHEBI:15588"/>
    </ligand>
</feature>
<protein>
    <recommendedName>
        <fullName>D-2-hydroxyglutarate dehydrogenase, mitochondrial</fullName>
        <ecNumber evidence="1">1.1.99.39</ecNumber>
    </recommendedName>
</protein>
<proteinExistence type="evidence at transcript level"/>
<sequence length="533" mass="58714">MGLFQKCSRLSLRSSYMWSVCPQYSIAVTARETPDRALIVHWTQHRDVHNSRRLGANPANPSAAPPRLPFSRVTQEDLSFFRALLPGRTITDPDLLKSSNVDWLKTVQGSSDVLLRPKTTEGVSQILRYCNERNLAVCPQGGNTGLVGGSVPVFDEIILSTSLMNQVFAFDNISGILTCQAGCVLENLSHYLEERDFIMPLDLGAKGSCHIGGNVSTNAGGLRLLRYGSLRGTVLGLEVVLADGHVLNCLATLRKDNTGYDLKQLFIGSEGTLGVITAVSILCPRKPKAVNVAFLGCSSFQQLLETFQCCRGMLGEILSAFEFLDASCMNLLEKHLKLTNPITECPFYIVIETAGSNATHDEEKLHQFLEEVMTSSLVTDGTVATEATKIKALWSLRERVTEALTHEGYTYKYDISLPVEKIYDLVQDMRRHLGGMAKNVVGYGHVGDGNLHLNITSPSKDFDLLAAIEPYVYEWTSQWKGSISAEHGLGLKKRNYIYYSKPSEAVALMGSIKAMLDPKGILNPYKTLPDNIN</sequence>
<comment type="function">
    <text evidence="1">Catalyzes the oxidation of D-2-hydroxyglutarate (D-2-HG) to alpha-ketoglutarate (By similarity). Also catalyzes the oxidation of other D-2-hydroxyacids, such as D-malate (D-MAL) and D-lactate (D-LAC) (By similarity). Exhibits high activities towards D-2-HG and D-MAL but a very weak activity towards D-LAC (By similarity).</text>
</comment>
<comment type="catalytic activity">
    <reaction evidence="1">
        <text>(R)-2-hydroxyglutarate + A = 2-oxoglutarate + AH2</text>
        <dbReference type="Rhea" id="RHEA:38295"/>
        <dbReference type="ChEBI" id="CHEBI:13193"/>
        <dbReference type="ChEBI" id="CHEBI:15801"/>
        <dbReference type="ChEBI" id="CHEBI:16810"/>
        <dbReference type="ChEBI" id="CHEBI:17499"/>
        <dbReference type="EC" id="1.1.99.39"/>
    </reaction>
</comment>
<comment type="catalytic activity">
    <reaction evidence="1">
        <text>(R)-malate + A = oxaloacetate + AH2</text>
        <dbReference type="Rhea" id="RHEA:67460"/>
        <dbReference type="ChEBI" id="CHEBI:13193"/>
        <dbReference type="ChEBI" id="CHEBI:15588"/>
        <dbReference type="ChEBI" id="CHEBI:16452"/>
        <dbReference type="ChEBI" id="CHEBI:17499"/>
    </reaction>
    <physiologicalReaction direction="left-to-right" evidence="1">
        <dbReference type="Rhea" id="RHEA:67461"/>
    </physiologicalReaction>
</comment>
<comment type="cofactor">
    <cofactor evidence="4">
        <name>FAD</name>
        <dbReference type="ChEBI" id="CHEBI:57692"/>
    </cofactor>
</comment>
<comment type="subcellular location">
    <subcellularLocation>
        <location evidence="4">Mitochondrion</location>
    </subcellularLocation>
</comment>
<comment type="similarity">
    <text evidence="4">Belongs to the FAD-binding oxidoreductase/transferase type 4 family.</text>
</comment>